<accession>Q71Y32</accession>
<comment type="function">
    <text evidence="1">Catalyzes the isomerization between 2-isopropylmalate and 3-isopropylmalate, via the formation of 2-isopropylmaleate.</text>
</comment>
<comment type="catalytic activity">
    <reaction evidence="1">
        <text>(2R,3S)-3-isopropylmalate = (2S)-2-isopropylmalate</text>
        <dbReference type="Rhea" id="RHEA:32287"/>
        <dbReference type="ChEBI" id="CHEBI:1178"/>
        <dbReference type="ChEBI" id="CHEBI:35121"/>
        <dbReference type="EC" id="4.2.1.33"/>
    </reaction>
</comment>
<comment type="pathway">
    <text evidence="1">Amino-acid biosynthesis; L-leucine biosynthesis; L-leucine from 3-methyl-2-oxobutanoate: step 2/4.</text>
</comment>
<comment type="subunit">
    <text evidence="1">Heterodimer of LeuC and LeuD.</text>
</comment>
<comment type="similarity">
    <text evidence="1">Belongs to the LeuD family. LeuD type 1 subfamily.</text>
</comment>
<protein>
    <recommendedName>
        <fullName evidence="1">3-isopropylmalate dehydratase small subunit</fullName>
        <ecNumber evidence="1">4.2.1.33</ecNumber>
    </recommendedName>
    <alternativeName>
        <fullName evidence="1">Alpha-IPM isomerase</fullName>
        <shortName evidence="1">IPMI</shortName>
    </alternativeName>
    <alternativeName>
        <fullName evidence="1">Isopropylmalate isomerase</fullName>
    </alternativeName>
</protein>
<name>LEUD_LISMF</name>
<proteinExistence type="inferred from homology"/>
<dbReference type="EC" id="4.2.1.33" evidence="1"/>
<dbReference type="EMBL" id="AE017262">
    <property type="protein sequence ID" value="AAT04783.1"/>
    <property type="molecule type" value="Genomic_DNA"/>
</dbReference>
<dbReference type="RefSeq" id="WP_003727975.1">
    <property type="nucleotide sequence ID" value="NC_002973.6"/>
</dbReference>
<dbReference type="SMR" id="Q71Y32"/>
<dbReference type="KEGG" id="lmf:LMOf2365_2013"/>
<dbReference type="HOGENOM" id="CLU_081378_0_3_9"/>
<dbReference type="UniPathway" id="UPA00048">
    <property type="reaction ID" value="UER00071"/>
</dbReference>
<dbReference type="GO" id="GO:0009316">
    <property type="term" value="C:3-isopropylmalate dehydratase complex"/>
    <property type="evidence" value="ECO:0007669"/>
    <property type="project" value="InterPro"/>
</dbReference>
<dbReference type="GO" id="GO:0003861">
    <property type="term" value="F:3-isopropylmalate dehydratase activity"/>
    <property type="evidence" value="ECO:0007669"/>
    <property type="project" value="UniProtKB-UniRule"/>
</dbReference>
<dbReference type="GO" id="GO:0009098">
    <property type="term" value="P:L-leucine biosynthetic process"/>
    <property type="evidence" value="ECO:0007669"/>
    <property type="project" value="UniProtKB-UniRule"/>
</dbReference>
<dbReference type="CDD" id="cd01577">
    <property type="entry name" value="IPMI_Swivel"/>
    <property type="match status" value="1"/>
</dbReference>
<dbReference type="FunFam" id="3.20.19.10:FF:000003">
    <property type="entry name" value="3-isopropylmalate dehydratase small subunit"/>
    <property type="match status" value="1"/>
</dbReference>
<dbReference type="Gene3D" id="3.20.19.10">
    <property type="entry name" value="Aconitase, domain 4"/>
    <property type="match status" value="1"/>
</dbReference>
<dbReference type="HAMAP" id="MF_01031">
    <property type="entry name" value="LeuD_type1"/>
    <property type="match status" value="1"/>
</dbReference>
<dbReference type="InterPro" id="IPR004431">
    <property type="entry name" value="3-IsopropMal_deHydase_ssu"/>
</dbReference>
<dbReference type="InterPro" id="IPR015928">
    <property type="entry name" value="Aconitase/3IPM_dehydase_swvl"/>
</dbReference>
<dbReference type="InterPro" id="IPR000573">
    <property type="entry name" value="AconitaseA/IPMdHydase_ssu_swvl"/>
</dbReference>
<dbReference type="InterPro" id="IPR033940">
    <property type="entry name" value="IPMI_Swivel"/>
</dbReference>
<dbReference type="InterPro" id="IPR050075">
    <property type="entry name" value="LeuD"/>
</dbReference>
<dbReference type="NCBIfam" id="TIGR00171">
    <property type="entry name" value="leuD"/>
    <property type="match status" value="1"/>
</dbReference>
<dbReference type="NCBIfam" id="NF002458">
    <property type="entry name" value="PRK01641.1"/>
    <property type="match status" value="1"/>
</dbReference>
<dbReference type="PANTHER" id="PTHR43345:SF5">
    <property type="entry name" value="3-ISOPROPYLMALATE DEHYDRATASE SMALL SUBUNIT"/>
    <property type="match status" value="1"/>
</dbReference>
<dbReference type="PANTHER" id="PTHR43345">
    <property type="entry name" value="3-ISOPROPYLMALATE DEHYDRATASE SMALL SUBUNIT 2-RELATED-RELATED"/>
    <property type="match status" value="1"/>
</dbReference>
<dbReference type="Pfam" id="PF00694">
    <property type="entry name" value="Aconitase_C"/>
    <property type="match status" value="1"/>
</dbReference>
<dbReference type="SUPFAM" id="SSF52016">
    <property type="entry name" value="LeuD/IlvD-like"/>
    <property type="match status" value="1"/>
</dbReference>
<gene>
    <name evidence="1" type="primary">leuD</name>
    <name type="ordered locus">LMOf2365_2013</name>
</gene>
<sequence>MEEIKVHIGKTVALMNDNIDTDQIIPKSFLKRIERTGFGEFLFDSWRYLPNRKPNPDFPLNAPDRQEATILITGDNFGCGSSREHAAWALLDYRFRVIIAGSYSDIFYMNCTKNGVLPIVLPREAREKLAKIAADENVTIDLPNQQVISSVGTYPFEIDATWKNKFINGLDDIAITFEHIDAIKAYEQKVDSI</sequence>
<keyword id="KW-0028">Amino-acid biosynthesis</keyword>
<keyword id="KW-0100">Branched-chain amino acid biosynthesis</keyword>
<keyword id="KW-0432">Leucine biosynthesis</keyword>
<keyword id="KW-0456">Lyase</keyword>
<organism>
    <name type="scientific">Listeria monocytogenes serotype 4b (strain F2365)</name>
    <dbReference type="NCBI Taxonomy" id="265669"/>
    <lineage>
        <taxon>Bacteria</taxon>
        <taxon>Bacillati</taxon>
        <taxon>Bacillota</taxon>
        <taxon>Bacilli</taxon>
        <taxon>Bacillales</taxon>
        <taxon>Listeriaceae</taxon>
        <taxon>Listeria</taxon>
    </lineage>
</organism>
<feature type="chain" id="PRO_0000141832" description="3-isopropylmalate dehydratase small subunit">
    <location>
        <begin position="1"/>
        <end position="193"/>
    </location>
</feature>
<reference key="1">
    <citation type="journal article" date="2004" name="Nucleic Acids Res.">
        <title>Whole genome comparisons of serotype 4b and 1/2a strains of the food-borne pathogen Listeria monocytogenes reveal new insights into the core genome components of this species.</title>
        <authorList>
            <person name="Nelson K.E."/>
            <person name="Fouts D.E."/>
            <person name="Mongodin E.F."/>
            <person name="Ravel J."/>
            <person name="DeBoy R.T."/>
            <person name="Kolonay J.F."/>
            <person name="Rasko D.A."/>
            <person name="Angiuoli S.V."/>
            <person name="Gill S.R."/>
            <person name="Paulsen I.T."/>
            <person name="Peterson J.D."/>
            <person name="White O."/>
            <person name="Nelson W.C."/>
            <person name="Nierman W.C."/>
            <person name="Beanan M.J."/>
            <person name="Brinkac L.M."/>
            <person name="Daugherty S.C."/>
            <person name="Dodson R.J."/>
            <person name="Durkin A.S."/>
            <person name="Madupu R."/>
            <person name="Haft D.H."/>
            <person name="Selengut J."/>
            <person name="Van Aken S.E."/>
            <person name="Khouri H.M."/>
            <person name="Fedorova N."/>
            <person name="Forberger H.A."/>
            <person name="Tran B."/>
            <person name="Kathariou S."/>
            <person name="Wonderling L.D."/>
            <person name="Uhlich G.A."/>
            <person name="Bayles D.O."/>
            <person name="Luchansky J.B."/>
            <person name="Fraser C.M."/>
        </authorList>
    </citation>
    <scope>NUCLEOTIDE SEQUENCE [LARGE SCALE GENOMIC DNA]</scope>
    <source>
        <strain>F2365</strain>
    </source>
</reference>
<evidence type="ECO:0000255" key="1">
    <source>
        <dbReference type="HAMAP-Rule" id="MF_01031"/>
    </source>
</evidence>